<dbReference type="EC" id="1.11.1.12" evidence="1"/>
<dbReference type="EC" id="1.11.1.9" evidence="3"/>
<dbReference type="EMBL" id="AB121010">
    <property type="protein sequence ID" value="BAE17018.1"/>
    <property type="molecule type" value="mRNA"/>
</dbReference>
<dbReference type="RefSeq" id="XP_054322083.1">
    <molecule id="Q4AEH2-1"/>
    <property type="nucleotide sequence ID" value="XM_054466108.2"/>
</dbReference>
<dbReference type="SMR" id="Q4AEH2"/>
<dbReference type="PeroxiBase" id="3728">
    <property type="entry name" value="PpyGPx04-A"/>
</dbReference>
<dbReference type="PeroxiBase" id="3968">
    <property type="entry name" value="PpyGPx04-B"/>
</dbReference>
<dbReference type="GeneID" id="129021026"/>
<dbReference type="GO" id="GO:0005829">
    <property type="term" value="C:cytosol"/>
    <property type="evidence" value="ECO:0000250"/>
    <property type="project" value="UniProtKB"/>
</dbReference>
<dbReference type="GO" id="GO:0005739">
    <property type="term" value="C:mitochondrion"/>
    <property type="evidence" value="ECO:0007669"/>
    <property type="project" value="UniProtKB-SubCell"/>
</dbReference>
<dbReference type="GO" id="GO:0005634">
    <property type="term" value="C:nucleus"/>
    <property type="evidence" value="ECO:0007669"/>
    <property type="project" value="TreeGrafter"/>
</dbReference>
<dbReference type="GO" id="GO:0004602">
    <property type="term" value="F:glutathione peroxidase activity"/>
    <property type="evidence" value="ECO:0000250"/>
    <property type="project" value="UniProtKB"/>
</dbReference>
<dbReference type="GO" id="GO:0047066">
    <property type="term" value="F:phospholipid-hydroperoxide glutathione peroxidase activity"/>
    <property type="evidence" value="ECO:0000250"/>
    <property type="project" value="UniProtKB"/>
</dbReference>
<dbReference type="GO" id="GO:0019369">
    <property type="term" value="P:arachidonate metabolic process"/>
    <property type="evidence" value="ECO:0000250"/>
    <property type="project" value="UniProtKB"/>
</dbReference>
<dbReference type="GO" id="GO:0019372">
    <property type="term" value="P:lipoxygenase pathway"/>
    <property type="evidence" value="ECO:0000250"/>
    <property type="project" value="UniProtKB"/>
</dbReference>
<dbReference type="GO" id="GO:0110076">
    <property type="term" value="P:negative regulation of ferroptosis"/>
    <property type="evidence" value="ECO:0000250"/>
    <property type="project" value="UniProtKB"/>
</dbReference>
<dbReference type="GO" id="GO:0006979">
    <property type="term" value="P:response to oxidative stress"/>
    <property type="evidence" value="ECO:0000250"/>
    <property type="project" value="UniProtKB"/>
</dbReference>
<dbReference type="GO" id="GO:0007283">
    <property type="term" value="P:spermatogenesis"/>
    <property type="evidence" value="ECO:0000250"/>
    <property type="project" value="UniProtKB"/>
</dbReference>
<dbReference type="CDD" id="cd00340">
    <property type="entry name" value="GSH_Peroxidase"/>
    <property type="match status" value="1"/>
</dbReference>
<dbReference type="FunFam" id="3.40.30.10:FF:000111">
    <property type="entry name" value="Glutathione peroxidase"/>
    <property type="match status" value="1"/>
</dbReference>
<dbReference type="Gene3D" id="3.40.30.10">
    <property type="entry name" value="Glutaredoxin"/>
    <property type="match status" value="1"/>
</dbReference>
<dbReference type="InterPro" id="IPR000889">
    <property type="entry name" value="Glutathione_peroxidase"/>
</dbReference>
<dbReference type="InterPro" id="IPR029759">
    <property type="entry name" value="GPX_AS"/>
</dbReference>
<dbReference type="InterPro" id="IPR029760">
    <property type="entry name" value="GPX_CS"/>
</dbReference>
<dbReference type="InterPro" id="IPR036249">
    <property type="entry name" value="Thioredoxin-like_sf"/>
</dbReference>
<dbReference type="PANTHER" id="PTHR11592">
    <property type="entry name" value="GLUTATHIONE PEROXIDASE"/>
    <property type="match status" value="1"/>
</dbReference>
<dbReference type="PANTHER" id="PTHR11592:SF134">
    <property type="entry name" value="PHOSPHOLIPID HYDROPEROXIDE GLUTATHIONE PEROXIDASE"/>
    <property type="match status" value="1"/>
</dbReference>
<dbReference type="Pfam" id="PF00255">
    <property type="entry name" value="GSHPx"/>
    <property type="match status" value="1"/>
</dbReference>
<dbReference type="PIRSF" id="PIRSF000303">
    <property type="entry name" value="Glutathion_perox"/>
    <property type="match status" value="1"/>
</dbReference>
<dbReference type="SUPFAM" id="SSF52833">
    <property type="entry name" value="Thioredoxin-like"/>
    <property type="match status" value="1"/>
</dbReference>
<dbReference type="PROSITE" id="PS00460">
    <property type="entry name" value="GLUTATHIONE_PEROXID_1"/>
    <property type="match status" value="1"/>
</dbReference>
<dbReference type="PROSITE" id="PS00763">
    <property type="entry name" value="GLUTATHIONE_PEROXID_2"/>
    <property type="match status" value="1"/>
</dbReference>
<dbReference type="PROSITE" id="PS51355">
    <property type="entry name" value="GLUTATHIONE_PEROXID_3"/>
    <property type="match status" value="1"/>
</dbReference>
<comment type="function">
    <text evidence="1 2 3">Essential antioxidant peroxidase that directly reduces phospholipid hydroperoxide even if they are incorporated in membranes and lipoproteins (By similarity). Can also reduce fatty acid hydroperoxide, cholesterol hydroperoxide and thymine hydroperoxide (By similarity). Plays a key role in protecting cells from oxidative damage by preventing membrane lipid peroxidation (By similarity). Required to prevent cells from ferroptosis, a non-apoptotic cell death resulting from an iron-dependent accumulation of lipid reactive oxygen species (By similarity). The presence of selenocysteine (Sec) versus Cys at the active site is essential for life: it provides resistance to overoxidation and prevents cells against ferroptosis (By similarity). The presence of Sec at the active site is also essential for the survival of a specific type of parvalbumin-positive interneurons, thereby preventing against fatal epileptic seizures (By similarity). May be required to protect cells from the toxicity of ingested lipid hydroperoxides (By similarity). Required for normal sperm development and male fertility (By similarity). Essential for maturation and survival of photoreceptor cells (By similarity). Plays a role in a primary T-cell response to viral and parasitic infection by protecting T-cells from ferroptosis and by supporting T-cell expansion (By similarity). Plays a role of glutathione peroxidase in platelets in the arachidonic acid metabolism (By similarity). Reduces hydroperoxy ester lipids formed by a 15-lipoxygenase that may play a role as down-regulator of the cellular 15-lipoxygenase pathway (By similarity). Can also reduce small soluble hydroperoxides such as H2O2, cumene hydroperoxide and tert-butyl hydroperoxide (By similarity).</text>
</comment>
<comment type="catalytic activity">
    <reaction evidence="2">
        <text>a hydroperoxy polyunsaturated fatty acid + 2 glutathione = a hydroxy polyunsaturated fatty acid + glutathione disulfide + H2O</text>
        <dbReference type="Rhea" id="RHEA:19057"/>
        <dbReference type="ChEBI" id="CHEBI:15377"/>
        <dbReference type="ChEBI" id="CHEBI:57925"/>
        <dbReference type="ChEBI" id="CHEBI:58297"/>
        <dbReference type="ChEBI" id="CHEBI:131871"/>
        <dbReference type="ChEBI" id="CHEBI:134019"/>
        <dbReference type="EC" id="1.11.1.12"/>
    </reaction>
    <physiologicalReaction direction="left-to-right" evidence="2">
        <dbReference type="Rhea" id="RHEA:19058"/>
    </physiologicalReaction>
</comment>
<comment type="catalytic activity">
    <reaction evidence="3">
        <text>2 glutathione + H2O2 = glutathione disulfide + 2 H2O</text>
        <dbReference type="Rhea" id="RHEA:16833"/>
        <dbReference type="ChEBI" id="CHEBI:15377"/>
        <dbReference type="ChEBI" id="CHEBI:16240"/>
        <dbReference type="ChEBI" id="CHEBI:57925"/>
        <dbReference type="ChEBI" id="CHEBI:58297"/>
        <dbReference type="EC" id="1.11.1.9"/>
    </reaction>
    <physiologicalReaction direction="left-to-right" evidence="3">
        <dbReference type="Rhea" id="RHEA:16834"/>
    </physiologicalReaction>
</comment>
<comment type="catalytic activity">
    <reaction evidence="3">
        <text>tert-butyl hydroperoxide + 2 glutathione = tert-butanol + glutathione disulfide + H2O</text>
        <dbReference type="Rhea" id="RHEA:69412"/>
        <dbReference type="ChEBI" id="CHEBI:15377"/>
        <dbReference type="ChEBI" id="CHEBI:45895"/>
        <dbReference type="ChEBI" id="CHEBI:57925"/>
        <dbReference type="ChEBI" id="CHEBI:58297"/>
        <dbReference type="ChEBI" id="CHEBI:64090"/>
    </reaction>
    <physiologicalReaction direction="left-to-right" evidence="3">
        <dbReference type="Rhea" id="RHEA:69413"/>
    </physiologicalReaction>
</comment>
<comment type="catalytic activity">
    <reaction evidence="3">
        <text>cumene hydroperoxide + 2 glutathione = 2-phenylpropan-2-ol + glutathione disulfide + H2O</text>
        <dbReference type="Rhea" id="RHEA:69651"/>
        <dbReference type="ChEBI" id="CHEBI:15377"/>
        <dbReference type="ChEBI" id="CHEBI:57925"/>
        <dbReference type="ChEBI" id="CHEBI:58297"/>
        <dbReference type="ChEBI" id="CHEBI:78673"/>
        <dbReference type="ChEBI" id="CHEBI:131607"/>
    </reaction>
    <physiologicalReaction direction="left-to-right" evidence="3">
        <dbReference type="Rhea" id="RHEA:69652"/>
    </physiologicalReaction>
</comment>
<comment type="catalytic activity">
    <reaction evidence="3">
        <text>(9S)-hydroperoxy-(10E,12Z)-octadecadienoate + 2 glutathione = (9S)-hydroxy-(10E,12Z)-octadecadienoate + glutathione disulfide + H2O</text>
        <dbReference type="Rhea" id="RHEA:76687"/>
        <dbReference type="ChEBI" id="CHEBI:15377"/>
        <dbReference type="ChEBI" id="CHEBI:57925"/>
        <dbReference type="ChEBI" id="CHEBI:58297"/>
        <dbReference type="ChEBI" id="CHEBI:60955"/>
        <dbReference type="ChEBI" id="CHEBI:77852"/>
    </reaction>
    <physiologicalReaction direction="left-to-right" evidence="3">
        <dbReference type="Rhea" id="RHEA:76688"/>
    </physiologicalReaction>
</comment>
<comment type="catalytic activity">
    <reaction evidence="3">
        <text>(13S)-hydroperoxy-(9Z,11E)-octadecadienoate + 2 glutathione = (13S)-hydroxy-(9Z,11E)-octadecadienoate + glutathione disulfide + H2O</text>
        <dbReference type="Rhea" id="RHEA:48888"/>
        <dbReference type="ChEBI" id="CHEBI:15377"/>
        <dbReference type="ChEBI" id="CHEBI:57466"/>
        <dbReference type="ChEBI" id="CHEBI:57925"/>
        <dbReference type="ChEBI" id="CHEBI:58297"/>
        <dbReference type="ChEBI" id="CHEBI:90850"/>
    </reaction>
    <physiologicalReaction direction="left-to-right" evidence="3">
        <dbReference type="Rhea" id="RHEA:48889"/>
    </physiologicalReaction>
</comment>
<comment type="catalytic activity">
    <reaction evidence="3">
        <text>(5S)-hydroperoxy-(6E,8Z,11Z,14Z)-eicosatetraenoate + 2 glutathione = (5S)-hydroxy-(6E,8Z,11Z,14Z)-eicosatetraenoate + glutathione disulfide + H2O</text>
        <dbReference type="Rhea" id="RHEA:48620"/>
        <dbReference type="ChEBI" id="CHEBI:15377"/>
        <dbReference type="ChEBI" id="CHEBI:57450"/>
        <dbReference type="ChEBI" id="CHEBI:57925"/>
        <dbReference type="ChEBI" id="CHEBI:58297"/>
        <dbReference type="ChEBI" id="CHEBI:90632"/>
    </reaction>
    <physiologicalReaction direction="left-to-right" evidence="3">
        <dbReference type="Rhea" id="RHEA:48621"/>
    </physiologicalReaction>
</comment>
<comment type="catalytic activity">
    <reaction evidence="3">
        <text>(12R)-hydroperoxy-(5Z,8Z,10E,14Z)-eicosatetraenoate + 2 glutathione = (12R)-hydroxy-(5Z,8Z,10E,14Z)-eicosatetraenoate + glutathione disulfide + H2O</text>
        <dbReference type="Rhea" id="RHEA:76691"/>
        <dbReference type="ChEBI" id="CHEBI:15377"/>
        <dbReference type="ChEBI" id="CHEBI:57925"/>
        <dbReference type="ChEBI" id="CHEBI:58297"/>
        <dbReference type="ChEBI" id="CHEBI:75230"/>
        <dbReference type="ChEBI" id="CHEBI:83343"/>
    </reaction>
    <physiologicalReaction direction="left-to-right" evidence="3">
        <dbReference type="Rhea" id="RHEA:76692"/>
    </physiologicalReaction>
</comment>
<comment type="catalytic activity">
    <reaction evidence="3">
        <text>(12S)-hydroperoxy-(5Z,8Z,10E,14Z)-eicosatetraenoate + 2 glutathione = (12S)-hydroxy-(5Z,8Z,10E,14Z)-eicosatetraenoate + glutathione disulfide + H2O</text>
        <dbReference type="Rhea" id="RHEA:50708"/>
        <dbReference type="ChEBI" id="CHEBI:15377"/>
        <dbReference type="ChEBI" id="CHEBI:57444"/>
        <dbReference type="ChEBI" id="CHEBI:57925"/>
        <dbReference type="ChEBI" id="CHEBI:58297"/>
        <dbReference type="ChEBI" id="CHEBI:90680"/>
    </reaction>
    <physiologicalReaction direction="left-to-right" evidence="3">
        <dbReference type="Rhea" id="RHEA:50709"/>
    </physiologicalReaction>
</comment>
<comment type="catalytic activity">
    <reaction evidence="3">
        <text>(15S)-hydroperoxy-(5Z,8Z,11Z,13E)-eicosatetraenoate + 2 glutathione = (15S)-hydroxy-(5Z,8Z,11Z,13E)-eicosatetraenoate + glutathione disulfide + H2O</text>
        <dbReference type="Rhea" id="RHEA:76695"/>
        <dbReference type="ChEBI" id="CHEBI:15377"/>
        <dbReference type="ChEBI" id="CHEBI:57409"/>
        <dbReference type="ChEBI" id="CHEBI:57446"/>
        <dbReference type="ChEBI" id="CHEBI:57925"/>
        <dbReference type="ChEBI" id="CHEBI:58297"/>
    </reaction>
    <physiologicalReaction direction="left-to-right" evidence="3">
        <dbReference type="Rhea" id="RHEA:76696"/>
    </physiologicalReaction>
</comment>
<comment type="catalytic activity">
    <reaction evidence="3">
        <text>(5S)-hydroperoxy-(6E,8Z,11Z,14Z,17Z)-eicosapentaenoate + 2 glutathione = (5S)-hydroxy-(6E,8Z,11Z,14Z,17Z)-eicosapentaenoate + glutathione disulfide + H2O</text>
        <dbReference type="Rhea" id="RHEA:76699"/>
        <dbReference type="ChEBI" id="CHEBI:15377"/>
        <dbReference type="ChEBI" id="CHEBI:57925"/>
        <dbReference type="ChEBI" id="CHEBI:58297"/>
        <dbReference type="ChEBI" id="CHEBI:195399"/>
        <dbReference type="ChEBI" id="CHEBI:195400"/>
    </reaction>
    <physiologicalReaction direction="left-to-right" evidence="3">
        <dbReference type="Rhea" id="RHEA:76700"/>
    </physiologicalReaction>
</comment>
<comment type="catalytic activity">
    <reaction evidence="3">
        <text>(12S)-hydroperoxy-(5Z,8Z,10E,14Z,17Z)-eicosapentaenoate + 2 glutathione = (12S)-hydroxy-(5Z,8Z,10E,14Z,17Z)-eicosapentaenoate + glutathione disulfide + H2O</text>
        <dbReference type="Rhea" id="RHEA:76703"/>
        <dbReference type="ChEBI" id="CHEBI:15377"/>
        <dbReference type="ChEBI" id="CHEBI:57925"/>
        <dbReference type="ChEBI" id="CHEBI:58297"/>
        <dbReference type="ChEBI" id="CHEBI:90772"/>
        <dbReference type="ChEBI" id="CHEBI:195401"/>
    </reaction>
    <physiologicalReaction direction="left-to-right" evidence="3">
        <dbReference type="Rhea" id="RHEA:76704"/>
    </physiologicalReaction>
</comment>
<comment type="catalytic activity">
    <reaction evidence="3">
        <text>(15S)-hydroperoxy-(5Z,8Z,11Z,13E,17Z)-eicosapentaenoate + 2 glutathione = (15S)-hydroxy-(5Z,8Z,11Z,13E,17Z)-eicosapentaenoate + glutathione disulfide + H2O</text>
        <dbReference type="Rhea" id="RHEA:76707"/>
        <dbReference type="ChEBI" id="CHEBI:15377"/>
        <dbReference type="ChEBI" id="CHEBI:57925"/>
        <dbReference type="ChEBI" id="CHEBI:58297"/>
        <dbReference type="ChEBI" id="CHEBI:132087"/>
        <dbReference type="ChEBI" id="CHEBI:194369"/>
    </reaction>
    <physiologicalReaction direction="left-to-right" evidence="3">
        <dbReference type="Rhea" id="RHEA:76708"/>
    </physiologicalReaction>
</comment>
<comment type="catalytic activity">
    <reaction evidence="3">
        <text>(15S)-hydroperoxy-(11Z,13E)-eicosadienoate + 2 glutathione = (15S)-hydroxy-(11Z,13E)-eicosadienoate + glutathione disulfide + H2O</text>
        <dbReference type="Rhea" id="RHEA:76711"/>
        <dbReference type="ChEBI" id="CHEBI:15377"/>
        <dbReference type="ChEBI" id="CHEBI:57925"/>
        <dbReference type="ChEBI" id="CHEBI:58297"/>
        <dbReference type="ChEBI" id="CHEBI:144832"/>
        <dbReference type="ChEBI" id="CHEBI:195402"/>
    </reaction>
    <physiologicalReaction direction="left-to-right" evidence="3">
        <dbReference type="Rhea" id="RHEA:76712"/>
    </physiologicalReaction>
</comment>
<comment type="catalytic activity">
    <reaction evidence="3">
        <text>(17S)-hydroperoxy-(4Z,7Z,10Z,13Z,15E,19Z)-docosahexaenoate + 2 glutathione = (17S)-hydroxy-(4Z,7Z,10Z,13Z,15E,19Z)-docosahexaenoate + glutathione disulfide + H2O</text>
        <dbReference type="Rhea" id="RHEA:76715"/>
        <dbReference type="ChEBI" id="CHEBI:15377"/>
        <dbReference type="ChEBI" id="CHEBI:57925"/>
        <dbReference type="ChEBI" id="CHEBI:58297"/>
        <dbReference type="ChEBI" id="CHEBI:133795"/>
        <dbReference type="ChEBI" id="CHEBI:195403"/>
    </reaction>
    <physiologicalReaction direction="left-to-right" evidence="3">
        <dbReference type="Rhea" id="RHEA:76716"/>
    </physiologicalReaction>
</comment>
<comment type="catalytic activity">
    <reaction evidence="3">
        <text>a hydroperoxy-1,2-diacyl-glycero-3-phosphocholine + 2 glutathione = a hydroxy-1,2-diacyl-glycero-3-phosphocholine + glutathione disulfide + H2O</text>
        <dbReference type="Rhea" id="RHEA:76731"/>
        <dbReference type="ChEBI" id="CHEBI:15377"/>
        <dbReference type="ChEBI" id="CHEBI:57925"/>
        <dbReference type="ChEBI" id="CHEBI:58297"/>
        <dbReference type="ChEBI" id="CHEBI:195423"/>
        <dbReference type="ChEBI" id="CHEBI:195424"/>
    </reaction>
    <physiologicalReaction direction="left-to-right" evidence="3">
        <dbReference type="Rhea" id="RHEA:76732"/>
    </physiologicalReaction>
</comment>
<comment type="subunit">
    <text evidence="3">Monomer. Has a tendency to form higher mass oligomers. Interacts with FUNDC1; this interaction promotes GPX4 recruitment into mitochondria through TOM/TIM complex where it is degraded by mitophagy.</text>
</comment>
<comment type="subcellular location">
    <molecule>Isoform Mitochondrial</molecule>
    <subcellularLocation>
        <location evidence="1">Mitochondrion</location>
    </subcellularLocation>
</comment>
<comment type="subcellular location">
    <molecule>Isoform Cytoplasmic</molecule>
    <subcellularLocation>
        <location evidence="1">Cytoplasm</location>
    </subcellularLocation>
</comment>
<comment type="alternative products">
    <event type="alternative initiation"/>
    <isoform>
        <id>Q4AEH2-1</id>
        <name>Mitochondrial</name>
        <sequence type="displayed"/>
    </isoform>
    <isoform>
        <id>Q4AEH2-2</id>
        <name>Cytoplasmic</name>
        <sequence type="described" ref="VSP_018745"/>
    </isoform>
</comment>
<comment type="similarity">
    <text evidence="6">Belongs to the glutathione peroxidase family.</text>
</comment>
<gene>
    <name evidence="1" type="primary">GPX4</name>
</gene>
<feature type="transit peptide" description="Mitochondrion" evidence="5">
    <location>
        <begin position="1"/>
        <end status="unknown"/>
    </location>
</feature>
<feature type="chain" id="PRO_0000042613" description="Phospholipid hydroperoxide glutathione peroxidase">
    <location>
        <begin status="unknown"/>
        <end position="197"/>
    </location>
</feature>
<feature type="active site" evidence="1">
    <location>
        <position position="73"/>
    </location>
</feature>
<feature type="non-standard amino acid" description="Selenocysteine" evidence="1">
    <location>
        <position position="73"/>
    </location>
</feature>
<feature type="modified residue" description="Phosphoserine" evidence="4">
    <location>
        <position position="40"/>
    </location>
</feature>
<feature type="splice variant" id="VSP_018745" description="In isoform Cytoplasmic." evidence="6">
    <location>
        <begin position="1"/>
        <end position="27"/>
    </location>
</feature>
<accession>Q4AEH2</accession>
<proteinExistence type="evidence at transcript level"/>
<organism>
    <name type="scientific">Pongo pygmaeus</name>
    <name type="common">Bornean orangutan</name>
    <dbReference type="NCBI Taxonomy" id="9600"/>
    <lineage>
        <taxon>Eukaryota</taxon>
        <taxon>Metazoa</taxon>
        <taxon>Chordata</taxon>
        <taxon>Craniata</taxon>
        <taxon>Vertebrata</taxon>
        <taxon>Euteleostomi</taxon>
        <taxon>Mammalia</taxon>
        <taxon>Eutheria</taxon>
        <taxon>Euarchontoglires</taxon>
        <taxon>Primates</taxon>
        <taxon>Haplorrhini</taxon>
        <taxon>Catarrhini</taxon>
        <taxon>Hominidae</taxon>
        <taxon>Pongo</taxon>
    </lineage>
</organism>
<sequence length="197" mass="22175">MSLGRLCRLLKPALLCGALAAPGLAGTMCASRDDWRCARSMHEFSAKDIDGHMVNLDKYRGFVCIVTNVASQUGKTEVNYTQLVDLHARYAECGLRILAFPCNQFGKQEPGSNEEIKEFAAGYNVKFDMFSKICVNGDDAHPLWKWMKIQPKGKGILGNAIKWNFTKFLIDKNGCVVKRYGPMEEPLVIEKDLPHYF</sequence>
<reference key="1">
    <citation type="journal article" date="2005" name="Comp. Biochem. Physiol.">
        <title>Structure, gene expression, and evolution of primate glutathione peroxidases.</title>
        <authorList>
            <person name="Fukuhara R."/>
            <person name="Kageyama T."/>
        </authorList>
    </citation>
    <scope>NUCLEOTIDE SEQUENCE [MRNA]</scope>
</reference>
<name>GPX4_PONPY</name>
<evidence type="ECO:0000250" key="1">
    <source>
        <dbReference type="UniProtKB" id="O70325"/>
    </source>
</evidence>
<evidence type="ECO:0000250" key="2">
    <source>
        <dbReference type="UniProtKB" id="P36968"/>
    </source>
</evidence>
<evidence type="ECO:0000250" key="3">
    <source>
        <dbReference type="UniProtKB" id="P36969"/>
    </source>
</evidence>
<evidence type="ECO:0000250" key="4">
    <source>
        <dbReference type="UniProtKB" id="P36970"/>
    </source>
</evidence>
<evidence type="ECO:0000255" key="5"/>
<evidence type="ECO:0000305" key="6"/>
<keyword id="KW-0024">Alternative initiation</keyword>
<keyword id="KW-0963">Cytoplasm</keyword>
<keyword id="KW-0217">Developmental protein</keyword>
<keyword id="KW-0443">Lipid metabolism</keyword>
<keyword id="KW-0496">Mitochondrion</keyword>
<keyword id="KW-0560">Oxidoreductase</keyword>
<keyword id="KW-0575">Peroxidase</keyword>
<keyword id="KW-0597">Phosphoprotein</keyword>
<keyword id="KW-0712">Selenocysteine</keyword>
<keyword id="KW-0809">Transit peptide</keyword>
<protein>
    <recommendedName>
        <fullName evidence="1">Phospholipid hydroperoxide glutathione peroxidase</fullName>
        <shortName evidence="1">PHGPx</shortName>
        <ecNumber evidence="1">1.11.1.12</ecNumber>
    </recommendedName>
    <alternativeName>
        <fullName evidence="1">Glutathione peroxidase 4</fullName>
        <shortName evidence="1">GPx-4</shortName>
        <shortName evidence="1">GSHPx-4</shortName>
        <ecNumber evidence="3">1.11.1.9</ecNumber>
    </alternativeName>
</protein>